<organism>
    <name type="scientific">Bartonella tribocorum (strain CIP 105476 / IBS 506)</name>
    <dbReference type="NCBI Taxonomy" id="382640"/>
    <lineage>
        <taxon>Bacteria</taxon>
        <taxon>Pseudomonadati</taxon>
        <taxon>Pseudomonadota</taxon>
        <taxon>Alphaproteobacteria</taxon>
        <taxon>Hyphomicrobiales</taxon>
        <taxon>Bartonellaceae</taxon>
        <taxon>Bartonella</taxon>
    </lineage>
</organism>
<reference key="1">
    <citation type="journal article" date="2007" name="Nat. Genet.">
        <title>Genomic analysis of Bartonella identifies type IV secretion systems as host adaptability factors.</title>
        <authorList>
            <person name="Saenz H.L."/>
            <person name="Engel P."/>
            <person name="Stoeckli M.C."/>
            <person name="Lanz C."/>
            <person name="Raddatz G."/>
            <person name="Vayssier-Taussat M."/>
            <person name="Birtles R."/>
            <person name="Schuster S.C."/>
            <person name="Dehio C."/>
        </authorList>
    </citation>
    <scope>NUCLEOTIDE SEQUENCE [LARGE SCALE GENOMIC DNA]</scope>
    <source>
        <strain>CIP 105476 / IBS 506</strain>
    </source>
</reference>
<comment type="function">
    <text evidence="1">Catalyzes the methylthiolation of N6-(dimethylallyl)adenosine (i(6)A), leading to the formation of 2-methylthio-N6-(dimethylallyl)adenosine (ms(2)i(6)A) at position 37 in tRNAs that read codons beginning with uridine.</text>
</comment>
<comment type="catalytic activity">
    <reaction evidence="1">
        <text>N(6)-dimethylallyladenosine(37) in tRNA + (sulfur carrier)-SH + AH2 + 2 S-adenosyl-L-methionine = 2-methylsulfanyl-N(6)-dimethylallyladenosine(37) in tRNA + (sulfur carrier)-H + 5'-deoxyadenosine + L-methionine + A + S-adenosyl-L-homocysteine + 2 H(+)</text>
        <dbReference type="Rhea" id="RHEA:37067"/>
        <dbReference type="Rhea" id="RHEA-COMP:10375"/>
        <dbReference type="Rhea" id="RHEA-COMP:10376"/>
        <dbReference type="Rhea" id="RHEA-COMP:14737"/>
        <dbReference type="Rhea" id="RHEA-COMP:14739"/>
        <dbReference type="ChEBI" id="CHEBI:13193"/>
        <dbReference type="ChEBI" id="CHEBI:15378"/>
        <dbReference type="ChEBI" id="CHEBI:17319"/>
        <dbReference type="ChEBI" id="CHEBI:17499"/>
        <dbReference type="ChEBI" id="CHEBI:29917"/>
        <dbReference type="ChEBI" id="CHEBI:57844"/>
        <dbReference type="ChEBI" id="CHEBI:57856"/>
        <dbReference type="ChEBI" id="CHEBI:59789"/>
        <dbReference type="ChEBI" id="CHEBI:64428"/>
        <dbReference type="ChEBI" id="CHEBI:74415"/>
        <dbReference type="ChEBI" id="CHEBI:74417"/>
        <dbReference type="EC" id="2.8.4.3"/>
    </reaction>
</comment>
<comment type="cofactor">
    <cofactor evidence="1">
        <name>[4Fe-4S] cluster</name>
        <dbReference type="ChEBI" id="CHEBI:49883"/>
    </cofactor>
    <text evidence="1">Binds 2 [4Fe-4S] clusters. One cluster is coordinated with 3 cysteines and an exchangeable S-adenosyl-L-methionine.</text>
</comment>
<comment type="subunit">
    <text evidence="1">Monomer.</text>
</comment>
<comment type="subcellular location">
    <subcellularLocation>
        <location evidence="1">Cytoplasm</location>
    </subcellularLocation>
</comment>
<comment type="similarity">
    <text evidence="1">Belongs to the methylthiotransferase family. MiaB subfamily.</text>
</comment>
<keyword id="KW-0004">4Fe-4S</keyword>
<keyword id="KW-0963">Cytoplasm</keyword>
<keyword id="KW-0408">Iron</keyword>
<keyword id="KW-0411">Iron-sulfur</keyword>
<keyword id="KW-0479">Metal-binding</keyword>
<keyword id="KW-0949">S-adenosyl-L-methionine</keyword>
<keyword id="KW-0808">Transferase</keyword>
<keyword id="KW-0819">tRNA processing</keyword>
<protein>
    <recommendedName>
        <fullName evidence="1">tRNA-2-methylthio-N(6)-dimethylallyladenosine synthase</fullName>
        <ecNumber evidence="1">2.8.4.3</ecNumber>
    </recommendedName>
    <alternativeName>
        <fullName evidence="1">(Dimethylallyl)adenosine tRNA methylthiotransferase MiaB</fullName>
    </alternativeName>
    <alternativeName>
        <fullName evidence="1">tRNA-i(6)A37 methylthiotransferase</fullName>
    </alternativeName>
</protein>
<proteinExistence type="inferred from homology"/>
<gene>
    <name evidence="1" type="primary">miaB</name>
    <name type="ordered locus">BT_0250</name>
</gene>
<sequence length="458" mass="51502">MNKVNPKNTSPVAPKKVFIKTYGCQMNVYDSQRMTDSLSSQGYVTTQTPNDADLILVNTCHIREKAAEKLYSDLGRLRVMRQERTPDKPLTVGVTGCVAQAEGSEILRRAPIVDLVIGPQMYHRLPELLEKAKQGKKIIETDYAVEDKFAHLPPHNKRAVRKRGVSAFLTVQEGCDKFCTFCVVPYTRGAEISRSVEQITEEARQLIEAGVKEITLLGQNVNGWHGQSADGKTWRLGDLLYHLAKLDGLKRLRYTTSHPRDMDDSLIAAHRDLDMLMPYLHLPVQSGSDRILKAMNRQHKSSYYLHLIEKIRAARPDIAFSGDFIVGFPGETDEDFEETIKLIQQVQYSSAYSFKYSPRPGTVGATMKNHVDESVKDARLQHLQVLLLEQQNTFLRSKIGQKTDVLIEKPGRHSGQMVGRSPWLLPVVVDTESSTGSVVEIHIKNASSNSFVGEMTNR</sequence>
<dbReference type="EC" id="2.8.4.3" evidence="1"/>
<dbReference type="EMBL" id="AM260525">
    <property type="protein sequence ID" value="CAK00726.1"/>
    <property type="molecule type" value="Genomic_DNA"/>
</dbReference>
<dbReference type="RefSeq" id="WP_012230653.1">
    <property type="nucleotide sequence ID" value="NC_010161.1"/>
</dbReference>
<dbReference type="SMR" id="A9IMW7"/>
<dbReference type="KEGG" id="btr:BT_0250"/>
<dbReference type="eggNOG" id="COG0621">
    <property type="taxonomic scope" value="Bacteria"/>
</dbReference>
<dbReference type="HOGENOM" id="CLU_018697_2_0_5"/>
<dbReference type="Proteomes" id="UP000001592">
    <property type="component" value="Chromosome"/>
</dbReference>
<dbReference type="GO" id="GO:0005829">
    <property type="term" value="C:cytosol"/>
    <property type="evidence" value="ECO:0007669"/>
    <property type="project" value="TreeGrafter"/>
</dbReference>
<dbReference type="GO" id="GO:0051539">
    <property type="term" value="F:4 iron, 4 sulfur cluster binding"/>
    <property type="evidence" value="ECO:0007669"/>
    <property type="project" value="UniProtKB-UniRule"/>
</dbReference>
<dbReference type="GO" id="GO:0046872">
    <property type="term" value="F:metal ion binding"/>
    <property type="evidence" value="ECO:0007669"/>
    <property type="project" value="UniProtKB-KW"/>
</dbReference>
<dbReference type="GO" id="GO:0035597">
    <property type="term" value="F:N6-isopentenyladenosine methylthiotransferase activity"/>
    <property type="evidence" value="ECO:0007669"/>
    <property type="project" value="TreeGrafter"/>
</dbReference>
<dbReference type="CDD" id="cd01335">
    <property type="entry name" value="Radical_SAM"/>
    <property type="match status" value="1"/>
</dbReference>
<dbReference type="FunFam" id="3.40.50.12160:FF:000003">
    <property type="entry name" value="CDK5 regulatory subunit-associated protein 1"/>
    <property type="match status" value="1"/>
</dbReference>
<dbReference type="FunFam" id="3.80.30.20:FF:000001">
    <property type="entry name" value="tRNA-2-methylthio-N(6)-dimethylallyladenosine synthase 2"/>
    <property type="match status" value="1"/>
</dbReference>
<dbReference type="Gene3D" id="3.40.50.12160">
    <property type="entry name" value="Methylthiotransferase, N-terminal domain"/>
    <property type="match status" value="1"/>
</dbReference>
<dbReference type="Gene3D" id="3.80.30.20">
    <property type="entry name" value="tm_1862 like domain"/>
    <property type="match status" value="1"/>
</dbReference>
<dbReference type="HAMAP" id="MF_01864">
    <property type="entry name" value="tRNA_metthiotr_MiaB"/>
    <property type="match status" value="1"/>
</dbReference>
<dbReference type="InterPro" id="IPR006638">
    <property type="entry name" value="Elp3/MiaA/NifB-like_rSAM"/>
</dbReference>
<dbReference type="InterPro" id="IPR005839">
    <property type="entry name" value="Methylthiotransferase"/>
</dbReference>
<dbReference type="InterPro" id="IPR020612">
    <property type="entry name" value="Methylthiotransferase_CS"/>
</dbReference>
<dbReference type="InterPro" id="IPR013848">
    <property type="entry name" value="Methylthiotransferase_N"/>
</dbReference>
<dbReference type="InterPro" id="IPR038135">
    <property type="entry name" value="Methylthiotransferase_N_sf"/>
</dbReference>
<dbReference type="InterPro" id="IPR006463">
    <property type="entry name" value="MiaB_methiolase"/>
</dbReference>
<dbReference type="InterPro" id="IPR007197">
    <property type="entry name" value="rSAM"/>
</dbReference>
<dbReference type="InterPro" id="IPR023404">
    <property type="entry name" value="rSAM_horseshoe"/>
</dbReference>
<dbReference type="InterPro" id="IPR002792">
    <property type="entry name" value="TRAM_dom"/>
</dbReference>
<dbReference type="NCBIfam" id="TIGR01574">
    <property type="entry name" value="miaB-methiolase"/>
    <property type="match status" value="1"/>
</dbReference>
<dbReference type="NCBIfam" id="TIGR00089">
    <property type="entry name" value="MiaB/RimO family radical SAM methylthiotransferase"/>
    <property type="match status" value="1"/>
</dbReference>
<dbReference type="PANTHER" id="PTHR43020">
    <property type="entry name" value="CDK5 REGULATORY SUBUNIT-ASSOCIATED PROTEIN 1"/>
    <property type="match status" value="1"/>
</dbReference>
<dbReference type="PANTHER" id="PTHR43020:SF2">
    <property type="entry name" value="MITOCHONDRIAL TRNA METHYLTHIOTRANSFERASE CDK5RAP1"/>
    <property type="match status" value="1"/>
</dbReference>
<dbReference type="Pfam" id="PF04055">
    <property type="entry name" value="Radical_SAM"/>
    <property type="match status" value="1"/>
</dbReference>
<dbReference type="Pfam" id="PF01938">
    <property type="entry name" value="TRAM"/>
    <property type="match status" value="1"/>
</dbReference>
<dbReference type="Pfam" id="PF00919">
    <property type="entry name" value="UPF0004"/>
    <property type="match status" value="1"/>
</dbReference>
<dbReference type="SFLD" id="SFLDF00273">
    <property type="entry name" value="(dimethylallyl)adenosine_tRNA"/>
    <property type="match status" value="1"/>
</dbReference>
<dbReference type="SFLD" id="SFLDG01082">
    <property type="entry name" value="B12-binding_domain_containing"/>
    <property type="match status" value="1"/>
</dbReference>
<dbReference type="SFLD" id="SFLDS00029">
    <property type="entry name" value="Radical_SAM"/>
    <property type="match status" value="1"/>
</dbReference>
<dbReference type="SMART" id="SM00729">
    <property type="entry name" value="Elp3"/>
    <property type="match status" value="1"/>
</dbReference>
<dbReference type="SUPFAM" id="SSF102114">
    <property type="entry name" value="Radical SAM enzymes"/>
    <property type="match status" value="1"/>
</dbReference>
<dbReference type="PROSITE" id="PS51449">
    <property type="entry name" value="MTTASE_N"/>
    <property type="match status" value="1"/>
</dbReference>
<dbReference type="PROSITE" id="PS01278">
    <property type="entry name" value="MTTASE_RADICAL"/>
    <property type="match status" value="1"/>
</dbReference>
<dbReference type="PROSITE" id="PS51918">
    <property type="entry name" value="RADICAL_SAM"/>
    <property type="match status" value="1"/>
</dbReference>
<dbReference type="PROSITE" id="PS50926">
    <property type="entry name" value="TRAM"/>
    <property type="match status" value="1"/>
</dbReference>
<accession>A9IMW7</accession>
<evidence type="ECO:0000255" key="1">
    <source>
        <dbReference type="HAMAP-Rule" id="MF_01864"/>
    </source>
</evidence>
<evidence type="ECO:0000255" key="2">
    <source>
        <dbReference type="PROSITE-ProRule" id="PRU01266"/>
    </source>
</evidence>
<name>MIAB_BART1</name>
<feature type="chain" id="PRO_0000374147" description="tRNA-2-methylthio-N(6)-dimethylallyladenosine synthase">
    <location>
        <begin position="1"/>
        <end position="458"/>
    </location>
</feature>
<feature type="domain" description="MTTase N-terminal" evidence="1">
    <location>
        <begin position="15"/>
        <end position="134"/>
    </location>
</feature>
<feature type="domain" description="Radical SAM core" evidence="2">
    <location>
        <begin position="161"/>
        <end position="395"/>
    </location>
</feature>
<feature type="domain" description="TRAM" evidence="1">
    <location>
        <begin position="396"/>
        <end position="457"/>
    </location>
</feature>
<feature type="binding site" evidence="1">
    <location>
        <position position="24"/>
    </location>
    <ligand>
        <name>[4Fe-4S] cluster</name>
        <dbReference type="ChEBI" id="CHEBI:49883"/>
        <label>1</label>
    </ligand>
</feature>
<feature type="binding site" evidence="1">
    <location>
        <position position="60"/>
    </location>
    <ligand>
        <name>[4Fe-4S] cluster</name>
        <dbReference type="ChEBI" id="CHEBI:49883"/>
        <label>1</label>
    </ligand>
</feature>
<feature type="binding site" evidence="1">
    <location>
        <position position="97"/>
    </location>
    <ligand>
        <name>[4Fe-4S] cluster</name>
        <dbReference type="ChEBI" id="CHEBI:49883"/>
        <label>1</label>
    </ligand>
</feature>
<feature type="binding site" evidence="1">
    <location>
        <position position="175"/>
    </location>
    <ligand>
        <name>[4Fe-4S] cluster</name>
        <dbReference type="ChEBI" id="CHEBI:49883"/>
        <label>2</label>
        <note>4Fe-4S-S-AdoMet</note>
    </ligand>
</feature>
<feature type="binding site" evidence="1">
    <location>
        <position position="179"/>
    </location>
    <ligand>
        <name>[4Fe-4S] cluster</name>
        <dbReference type="ChEBI" id="CHEBI:49883"/>
        <label>2</label>
        <note>4Fe-4S-S-AdoMet</note>
    </ligand>
</feature>
<feature type="binding site" evidence="1">
    <location>
        <position position="182"/>
    </location>
    <ligand>
        <name>[4Fe-4S] cluster</name>
        <dbReference type="ChEBI" id="CHEBI:49883"/>
        <label>2</label>
        <note>4Fe-4S-S-AdoMet</note>
    </ligand>
</feature>